<sequence>MRIGHGFDVHAFGGEGPIIIGGVRIPYEKGLLAHSDGDVALHALTDALLGAAALGDIGKLFPDTDPAFKGADSRELLREAWRRIQAKGYTLGNVDVTIIAQAPKMLPHIPQMRVFIAEDLGCHMDDVNVKATTTEKLGFTGRGEGIACEAVALLIKATK</sequence>
<comment type="function">
    <text evidence="1">Involved in the biosynthesis of isopentenyl diphosphate (IPP) and dimethylallyl diphosphate (DMAPP), two major building blocks of isoprenoid compounds. Catalyzes the conversion of 4-diphosphocytidyl-2-C-methyl-D-erythritol 2-phosphate (CDP-ME2P) to 2-C-methyl-D-erythritol 2,4-cyclodiphosphate (ME-CPP) with a corresponding release of cytidine 5-monophosphate (CMP).</text>
</comment>
<comment type="catalytic activity">
    <reaction evidence="1">
        <text>4-CDP-2-C-methyl-D-erythritol 2-phosphate = 2-C-methyl-D-erythritol 2,4-cyclic diphosphate + CMP</text>
        <dbReference type="Rhea" id="RHEA:23864"/>
        <dbReference type="ChEBI" id="CHEBI:57919"/>
        <dbReference type="ChEBI" id="CHEBI:58483"/>
        <dbReference type="ChEBI" id="CHEBI:60377"/>
        <dbReference type="EC" id="4.6.1.12"/>
    </reaction>
</comment>
<comment type="cofactor">
    <cofactor evidence="1">
        <name>a divalent metal cation</name>
        <dbReference type="ChEBI" id="CHEBI:60240"/>
    </cofactor>
    <text evidence="1">Binds 1 divalent metal cation per subunit.</text>
</comment>
<comment type="pathway">
    <text evidence="1">Isoprenoid biosynthesis; isopentenyl diphosphate biosynthesis via DXP pathway; isopentenyl diphosphate from 1-deoxy-D-xylulose 5-phosphate: step 4/6.</text>
</comment>
<comment type="subunit">
    <text evidence="1">Homotrimer.</text>
</comment>
<comment type="similarity">
    <text evidence="1">Belongs to the IspF family.</text>
</comment>
<protein>
    <recommendedName>
        <fullName evidence="1">2-C-methyl-D-erythritol 2,4-cyclodiphosphate synthase</fullName>
        <shortName evidence="1">MECDP-synthase</shortName>
        <shortName evidence="1">MECPP-synthase</shortName>
        <shortName evidence="1">MECPS</shortName>
        <ecNumber evidence="1">4.6.1.12</ecNumber>
    </recommendedName>
</protein>
<organism>
    <name type="scientific">Escherichia coli (strain 55989 / EAEC)</name>
    <dbReference type="NCBI Taxonomy" id="585055"/>
    <lineage>
        <taxon>Bacteria</taxon>
        <taxon>Pseudomonadati</taxon>
        <taxon>Pseudomonadota</taxon>
        <taxon>Gammaproteobacteria</taxon>
        <taxon>Enterobacterales</taxon>
        <taxon>Enterobacteriaceae</taxon>
        <taxon>Escherichia</taxon>
    </lineage>
</organism>
<accession>B7LEG4</accession>
<dbReference type="EC" id="4.6.1.12" evidence="1"/>
<dbReference type="EMBL" id="CU928145">
    <property type="protein sequence ID" value="CAU98901.1"/>
    <property type="molecule type" value="Genomic_DNA"/>
</dbReference>
<dbReference type="RefSeq" id="WP_001219242.1">
    <property type="nucleotide sequence ID" value="NC_011748.1"/>
</dbReference>
<dbReference type="SMR" id="B7LEG4"/>
<dbReference type="GeneID" id="93779260"/>
<dbReference type="KEGG" id="eck:EC55989_3018"/>
<dbReference type="HOGENOM" id="CLU_084630_2_0_6"/>
<dbReference type="UniPathway" id="UPA00056">
    <property type="reaction ID" value="UER00095"/>
</dbReference>
<dbReference type="Proteomes" id="UP000000746">
    <property type="component" value="Chromosome"/>
</dbReference>
<dbReference type="GO" id="GO:0008685">
    <property type="term" value="F:2-C-methyl-D-erythritol 2,4-cyclodiphosphate synthase activity"/>
    <property type="evidence" value="ECO:0007669"/>
    <property type="project" value="UniProtKB-UniRule"/>
</dbReference>
<dbReference type="GO" id="GO:0046872">
    <property type="term" value="F:metal ion binding"/>
    <property type="evidence" value="ECO:0007669"/>
    <property type="project" value="UniProtKB-KW"/>
</dbReference>
<dbReference type="GO" id="GO:0019288">
    <property type="term" value="P:isopentenyl diphosphate biosynthetic process, methylerythritol 4-phosphate pathway"/>
    <property type="evidence" value="ECO:0007669"/>
    <property type="project" value="UniProtKB-UniRule"/>
</dbReference>
<dbReference type="GO" id="GO:0016114">
    <property type="term" value="P:terpenoid biosynthetic process"/>
    <property type="evidence" value="ECO:0007669"/>
    <property type="project" value="InterPro"/>
</dbReference>
<dbReference type="CDD" id="cd00554">
    <property type="entry name" value="MECDP_synthase"/>
    <property type="match status" value="1"/>
</dbReference>
<dbReference type="FunFam" id="3.30.1330.50:FF:000001">
    <property type="entry name" value="2-C-methyl-D-erythritol 2,4-cyclodiphosphate synthase"/>
    <property type="match status" value="1"/>
</dbReference>
<dbReference type="Gene3D" id="3.30.1330.50">
    <property type="entry name" value="2-C-methyl-D-erythritol 2,4-cyclodiphosphate synthase"/>
    <property type="match status" value="1"/>
</dbReference>
<dbReference type="HAMAP" id="MF_00107">
    <property type="entry name" value="IspF"/>
    <property type="match status" value="1"/>
</dbReference>
<dbReference type="InterPro" id="IPR003526">
    <property type="entry name" value="MECDP_synthase"/>
</dbReference>
<dbReference type="InterPro" id="IPR020555">
    <property type="entry name" value="MECDP_synthase_CS"/>
</dbReference>
<dbReference type="InterPro" id="IPR036571">
    <property type="entry name" value="MECDP_synthase_sf"/>
</dbReference>
<dbReference type="NCBIfam" id="TIGR00151">
    <property type="entry name" value="ispF"/>
    <property type="match status" value="1"/>
</dbReference>
<dbReference type="PANTHER" id="PTHR43181">
    <property type="entry name" value="2-C-METHYL-D-ERYTHRITOL 2,4-CYCLODIPHOSPHATE SYNTHASE, CHLOROPLASTIC"/>
    <property type="match status" value="1"/>
</dbReference>
<dbReference type="PANTHER" id="PTHR43181:SF1">
    <property type="entry name" value="2-C-METHYL-D-ERYTHRITOL 2,4-CYCLODIPHOSPHATE SYNTHASE, CHLOROPLASTIC"/>
    <property type="match status" value="1"/>
</dbReference>
<dbReference type="Pfam" id="PF02542">
    <property type="entry name" value="YgbB"/>
    <property type="match status" value="1"/>
</dbReference>
<dbReference type="SUPFAM" id="SSF69765">
    <property type="entry name" value="IpsF-like"/>
    <property type="match status" value="1"/>
</dbReference>
<dbReference type="PROSITE" id="PS01350">
    <property type="entry name" value="ISPF"/>
    <property type="match status" value="1"/>
</dbReference>
<proteinExistence type="inferred from homology"/>
<feature type="chain" id="PRO_1000190707" description="2-C-methyl-D-erythritol 2,4-cyclodiphosphate synthase">
    <location>
        <begin position="1"/>
        <end position="159"/>
    </location>
</feature>
<feature type="binding site" evidence="1">
    <location>
        <begin position="8"/>
        <end position="10"/>
    </location>
    <ligand>
        <name>4-CDP-2-C-methyl-D-erythritol 2-phosphate</name>
        <dbReference type="ChEBI" id="CHEBI:57919"/>
    </ligand>
</feature>
<feature type="binding site" evidence="1">
    <location>
        <position position="8"/>
    </location>
    <ligand>
        <name>a divalent metal cation</name>
        <dbReference type="ChEBI" id="CHEBI:60240"/>
    </ligand>
</feature>
<feature type="binding site" evidence="1">
    <location>
        <position position="10"/>
    </location>
    <ligand>
        <name>a divalent metal cation</name>
        <dbReference type="ChEBI" id="CHEBI:60240"/>
    </ligand>
</feature>
<feature type="binding site" evidence="1">
    <location>
        <begin position="34"/>
        <end position="35"/>
    </location>
    <ligand>
        <name>4-CDP-2-C-methyl-D-erythritol 2-phosphate</name>
        <dbReference type="ChEBI" id="CHEBI:57919"/>
    </ligand>
</feature>
<feature type="binding site" evidence="1">
    <location>
        <position position="42"/>
    </location>
    <ligand>
        <name>a divalent metal cation</name>
        <dbReference type="ChEBI" id="CHEBI:60240"/>
    </ligand>
</feature>
<feature type="binding site" evidence="1">
    <location>
        <begin position="56"/>
        <end position="58"/>
    </location>
    <ligand>
        <name>4-CDP-2-C-methyl-D-erythritol 2-phosphate</name>
        <dbReference type="ChEBI" id="CHEBI:57919"/>
    </ligand>
</feature>
<feature type="binding site" evidence="1">
    <location>
        <begin position="61"/>
        <end position="65"/>
    </location>
    <ligand>
        <name>4-CDP-2-C-methyl-D-erythritol 2-phosphate</name>
        <dbReference type="ChEBI" id="CHEBI:57919"/>
    </ligand>
</feature>
<feature type="binding site" evidence="1">
    <location>
        <begin position="100"/>
        <end position="106"/>
    </location>
    <ligand>
        <name>4-CDP-2-C-methyl-D-erythritol 2-phosphate</name>
        <dbReference type="ChEBI" id="CHEBI:57919"/>
    </ligand>
</feature>
<feature type="binding site" evidence="1">
    <location>
        <begin position="132"/>
        <end position="135"/>
    </location>
    <ligand>
        <name>4-CDP-2-C-methyl-D-erythritol 2-phosphate</name>
        <dbReference type="ChEBI" id="CHEBI:57919"/>
    </ligand>
</feature>
<feature type="binding site" evidence="1">
    <location>
        <position position="139"/>
    </location>
    <ligand>
        <name>4-CDP-2-C-methyl-D-erythritol 2-phosphate</name>
        <dbReference type="ChEBI" id="CHEBI:57919"/>
    </ligand>
</feature>
<feature type="binding site" evidence="1">
    <location>
        <position position="142"/>
    </location>
    <ligand>
        <name>4-CDP-2-C-methyl-D-erythritol 2-phosphate</name>
        <dbReference type="ChEBI" id="CHEBI:57919"/>
    </ligand>
</feature>
<feature type="site" description="Transition state stabilizer" evidence="1">
    <location>
        <position position="34"/>
    </location>
</feature>
<feature type="site" description="Transition state stabilizer" evidence="1">
    <location>
        <position position="133"/>
    </location>
</feature>
<evidence type="ECO:0000255" key="1">
    <source>
        <dbReference type="HAMAP-Rule" id="MF_00107"/>
    </source>
</evidence>
<name>ISPF_ECO55</name>
<gene>
    <name evidence="1" type="primary">ispF</name>
    <name type="ordered locus">EC55989_3018</name>
</gene>
<keyword id="KW-0414">Isoprene biosynthesis</keyword>
<keyword id="KW-0456">Lyase</keyword>
<keyword id="KW-0479">Metal-binding</keyword>
<keyword id="KW-1185">Reference proteome</keyword>
<reference key="1">
    <citation type="journal article" date="2009" name="PLoS Genet.">
        <title>Organised genome dynamics in the Escherichia coli species results in highly diverse adaptive paths.</title>
        <authorList>
            <person name="Touchon M."/>
            <person name="Hoede C."/>
            <person name="Tenaillon O."/>
            <person name="Barbe V."/>
            <person name="Baeriswyl S."/>
            <person name="Bidet P."/>
            <person name="Bingen E."/>
            <person name="Bonacorsi S."/>
            <person name="Bouchier C."/>
            <person name="Bouvet O."/>
            <person name="Calteau A."/>
            <person name="Chiapello H."/>
            <person name="Clermont O."/>
            <person name="Cruveiller S."/>
            <person name="Danchin A."/>
            <person name="Diard M."/>
            <person name="Dossat C."/>
            <person name="Karoui M.E."/>
            <person name="Frapy E."/>
            <person name="Garry L."/>
            <person name="Ghigo J.M."/>
            <person name="Gilles A.M."/>
            <person name="Johnson J."/>
            <person name="Le Bouguenec C."/>
            <person name="Lescat M."/>
            <person name="Mangenot S."/>
            <person name="Martinez-Jehanne V."/>
            <person name="Matic I."/>
            <person name="Nassif X."/>
            <person name="Oztas S."/>
            <person name="Petit M.A."/>
            <person name="Pichon C."/>
            <person name="Rouy Z."/>
            <person name="Ruf C.S."/>
            <person name="Schneider D."/>
            <person name="Tourret J."/>
            <person name="Vacherie B."/>
            <person name="Vallenet D."/>
            <person name="Medigue C."/>
            <person name="Rocha E.P.C."/>
            <person name="Denamur E."/>
        </authorList>
    </citation>
    <scope>NUCLEOTIDE SEQUENCE [LARGE SCALE GENOMIC DNA]</scope>
    <source>
        <strain>55989 / EAEC</strain>
    </source>
</reference>